<gene>
    <name evidence="1" type="primary">rpsZ</name>
    <name evidence="1" type="synonym">rpsN</name>
    <name type="ordered locus">SaurJH1_2305</name>
</gene>
<evidence type="ECO:0000255" key="1">
    <source>
        <dbReference type="HAMAP-Rule" id="MF_01364"/>
    </source>
</evidence>
<evidence type="ECO:0000305" key="2"/>
<protein>
    <recommendedName>
        <fullName evidence="1">Small ribosomal subunit protein uS14B</fullName>
    </recommendedName>
    <alternativeName>
        <fullName evidence="2">30S ribosomal protein S14 type Z</fullName>
    </alternativeName>
</protein>
<feature type="chain" id="PRO_1000087022" description="Small ribosomal subunit protein uS14B">
    <location>
        <begin position="1"/>
        <end position="61"/>
    </location>
</feature>
<feature type="binding site" evidence="1">
    <location>
        <position position="24"/>
    </location>
    <ligand>
        <name>Zn(2+)</name>
        <dbReference type="ChEBI" id="CHEBI:29105"/>
    </ligand>
</feature>
<feature type="binding site" evidence="1">
    <location>
        <position position="27"/>
    </location>
    <ligand>
        <name>Zn(2+)</name>
        <dbReference type="ChEBI" id="CHEBI:29105"/>
    </ligand>
</feature>
<feature type="binding site" evidence="1">
    <location>
        <position position="40"/>
    </location>
    <ligand>
        <name>Zn(2+)</name>
        <dbReference type="ChEBI" id="CHEBI:29105"/>
    </ligand>
</feature>
<feature type="binding site" evidence="1">
    <location>
        <position position="43"/>
    </location>
    <ligand>
        <name>Zn(2+)</name>
        <dbReference type="ChEBI" id="CHEBI:29105"/>
    </ligand>
</feature>
<dbReference type="EMBL" id="CP000736">
    <property type="protein sequence ID" value="ABR53130.1"/>
    <property type="molecule type" value="Genomic_DNA"/>
</dbReference>
<dbReference type="SMR" id="A6U3W2"/>
<dbReference type="KEGG" id="sah:SaurJH1_2305"/>
<dbReference type="HOGENOM" id="CLU_139869_3_0_9"/>
<dbReference type="GO" id="GO:0015935">
    <property type="term" value="C:small ribosomal subunit"/>
    <property type="evidence" value="ECO:0007669"/>
    <property type="project" value="TreeGrafter"/>
</dbReference>
<dbReference type="GO" id="GO:0019843">
    <property type="term" value="F:rRNA binding"/>
    <property type="evidence" value="ECO:0007669"/>
    <property type="project" value="UniProtKB-UniRule"/>
</dbReference>
<dbReference type="GO" id="GO:0003735">
    <property type="term" value="F:structural constituent of ribosome"/>
    <property type="evidence" value="ECO:0007669"/>
    <property type="project" value="InterPro"/>
</dbReference>
<dbReference type="GO" id="GO:0008270">
    <property type="term" value="F:zinc ion binding"/>
    <property type="evidence" value="ECO:0007669"/>
    <property type="project" value="UniProtKB-UniRule"/>
</dbReference>
<dbReference type="GO" id="GO:0006412">
    <property type="term" value="P:translation"/>
    <property type="evidence" value="ECO:0007669"/>
    <property type="project" value="UniProtKB-UniRule"/>
</dbReference>
<dbReference type="FunFam" id="4.10.830.10:FF:000001">
    <property type="entry name" value="30S ribosomal protein S14 type Z"/>
    <property type="match status" value="1"/>
</dbReference>
<dbReference type="Gene3D" id="4.10.830.10">
    <property type="entry name" value="30s Ribosomal Protein S14, Chain N"/>
    <property type="match status" value="1"/>
</dbReference>
<dbReference type="HAMAP" id="MF_01364_B">
    <property type="entry name" value="Ribosomal_uS14_2_B"/>
    <property type="match status" value="1"/>
</dbReference>
<dbReference type="InterPro" id="IPR001209">
    <property type="entry name" value="Ribosomal_uS14"/>
</dbReference>
<dbReference type="InterPro" id="IPR023053">
    <property type="entry name" value="Ribosomal_uS14_bact"/>
</dbReference>
<dbReference type="InterPro" id="IPR018271">
    <property type="entry name" value="Ribosomal_uS14_CS"/>
</dbReference>
<dbReference type="InterPro" id="IPR043140">
    <property type="entry name" value="Ribosomal_uS14_sf"/>
</dbReference>
<dbReference type="NCBIfam" id="NF005974">
    <property type="entry name" value="PRK08061.1"/>
    <property type="match status" value="1"/>
</dbReference>
<dbReference type="PANTHER" id="PTHR19836">
    <property type="entry name" value="30S RIBOSOMAL PROTEIN S14"/>
    <property type="match status" value="1"/>
</dbReference>
<dbReference type="PANTHER" id="PTHR19836:SF26">
    <property type="entry name" value="SMALL RIBOSOMAL SUBUNIT PROTEIN US14B"/>
    <property type="match status" value="1"/>
</dbReference>
<dbReference type="Pfam" id="PF00253">
    <property type="entry name" value="Ribosomal_S14"/>
    <property type="match status" value="1"/>
</dbReference>
<dbReference type="SUPFAM" id="SSF57716">
    <property type="entry name" value="Glucocorticoid receptor-like (DNA-binding domain)"/>
    <property type="match status" value="1"/>
</dbReference>
<dbReference type="PROSITE" id="PS00527">
    <property type="entry name" value="RIBOSOMAL_S14"/>
    <property type="match status" value="1"/>
</dbReference>
<sequence length="61" mass="7300">MAKTSMVAKQQKKQKYAVREYTRCERCGRPHSVYRKFKLCRICFRELAYKGQIPGVRKASW</sequence>
<accession>A6U3W2</accession>
<comment type="function">
    <text evidence="1">Binds 16S rRNA, required for the assembly of 30S particles and may also be responsible for determining the conformation of the 16S rRNA at the A site.</text>
</comment>
<comment type="cofactor">
    <cofactor evidence="1">
        <name>Zn(2+)</name>
        <dbReference type="ChEBI" id="CHEBI:29105"/>
    </cofactor>
    <text evidence="1">Binds 1 zinc ion per subunit.</text>
</comment>
<comment type="subunit">
    <text evidence="1">Part of the 30S ribosomal subunit. Contacts proteins S3 and S10.</text>
</comment>
<comment type="similarity">
    <text evidence="1">Belongs to the universal ribosomal protein uS14 family. Zinc-binding uS14 subfamily.</text>
</comment>
<name>RS14Z_STAA2</name>
<reference key="1">
    <citation type="submission" date="2007-06" db="EMBL/GenBank/DDBJ databases">
        <title>Complete sequence of chromosome of Staphylococcus aureus subsp. aureus JH1.</title>
        <authorList>
            <consortium name="US DOE Joint Genome Institute"/>
            <person name="Copeland A."/>
            <person name="Lucas S."/>
            <person name="Lapidus A."/>
            <person name="Barry K."/>
            <person name="Detter J.C."/>
            <person name="Glavina del Rio T."/>
            <person name="Hammon N."/>
            <person name="Israni S."/>
            <person name="Dalin E."/>
            <person name="Tice H."/>
            <person name="Pitluck S."/>
            <person name="Chain P."/>
            <person name="Malfatti S."/>
            <person name="Shin M."/>
            <person name="Vergez L."/>
            <person name="Schmutz J."/>
            <person name="Larimer F."/>
            <person name="Land M."/>
            <person name="Hauser L."/>
            <person name="Kyrpides N."/>
            <person name="Ivanova N."/>
            <person name="Tomasz A."/>
            <person name="Richardson P."/>
        </authorList>
    </citation>
    <scope>NUCLEOTIDE SEQUENCE [LARGE SCALE GENOMIC DNA]</scope>
    <source>
        <strain>JH1</strain>
    </source>
</reference>
<proteinExistence type="inferred from homology"/>
<organism>
    <name type="scientific">Staphylococcus aureus (strain JH1)</name>
    <dbReference type="NCBI Taxonomy" id="359787"/>
    <lineage>
        <taxon>Bacteria</taxon>
        <taxon>Bacillati</taxon>
        <taxon>Bacillota</taxon>
        <taxon>Bacilli</taxon>
        <taxon>Bacillales</taxon>
        <taxon>Staphylococcaceae</taxon>
        <taxon>Staphylococcus</taxon>
    </lineage>
</organism>
<keyword id="KW-0479">Metal-binding</keyword>
<keyword id="KW-0687">Ribonucleoprotein</keyword>
<keyword id="KW-0689">Ribosomal protein</keyword>
<keyword id="KW-0694">RNA-binding</keyword>
<keyword id="KW-0699">rRNA-binding</keyword>
<keyword id="KW-0862">Zinc</keyword>